<name>HIS3_BACCR</name>
<keyword id="KW-0028">Amino-acid biosynthesis</keyword>
<keyword id="KW-0963">Cytoplasm</keyword>
<keyword id="KW-0368">Histidine biosynthesis</keyword>
<keyword id="KW-0378">Hydrolase</keyword>
<keyword id="KW-0460">Magnesium</keyword>
<keyword id="KW-0479">Metal-binding</keyword>
<keyword id="KW-1185">Reference proteome</keyword>
<keyword id="KW-0862">Zinc</keyword>
<accession>Q81G01</accession>
<proteinExistence type="inferred from homology"/>
<dbReference type="EC" id="3.5.4.19" evidence="1"/>
<dbReference type="EMBL" id="AE016877">
    <property type="protein sequence ID" value="AAP08392.1"/>
    <property type="molecule type" value="Genomic_DNA"/>
</dbReference>
<dbReference type="RefSeq" id="NP_831191.1">
    <property type="nucleotide sequence ID" value="NC_004722.1"/>
</dbReference>
<dbReference type="RefSeq" id="WP_000803957.1">
    <property type="nucleotide sequence ID" value="NC_004722.1"/>
</dbReference>
<dbReference type="SMR" id="Q81G01"/>
<dbReference type="STRING" id="226900.BC_1411"/>
<dbReference type="KEGG" id="bce:BC1411"/>
<dbReference type="PATRIC" id="fig|226900.8.peg.1388"/>
<dbReference type="HOGENOM" id="CLU_048577_5_3_9"/>
<dbReference type="OrthoDB" id="9795769at2"/>
<dbReference type="UniPathway" id="UPA00031">
    <property type="reaction ID" value="UER00008"/>
</dbReference>
<dbReference type="Proteomes" id="UP000001417">
    <property type="component" value="Chromosome"/>
</dbReference>
<dbReference type="GO" id="GO:0005737">
    <property type="term" value="C:cytoplasm"/>
    <property type="evidence" value="ECO:0007669"/>
    <property type="project" value="UniProtKB-SubCell"/>
</dbReference>
<dbReference type="GO" id="GO:0000287">
    <property type="term" value="F:magnesium ion binding"/>
    <property type="evidence" value="ECO:0007669"/>
    <property type="project" value="UniProtKB-UniRule"/>
</dbReference>
<dbReference type="GO" id="GO:0004635">
    <property type="term" value="F:phosphoribosyl-AMP cyclohydrolase activity"/>
    <property type="evidence" value="ECO:0007669"/>
    <property type="project" value="UniProtKB-UniRule"/>
</dbReference>
<dbReference type="GO" id="GO:0008270">
    <property type="term" value="F:zinc ion binding"/>
    <property type="evidence" value="ECO:0007669"/>
    <property type="project" value="UniProtKB-UniRule"/>
</dbReference>
<dbReference type="GO" id="GO:0000105">
    <property type="term" value="P:L-histidine biosynthetic process"/>
    <property type="evidence" value="ECO:0007669"/>
    <property type="project" value="UniProtKB-UniRule"/>
</dbReference>
<dbReference type="FunFam" id="3.10.20.810:FF:000001">
    <property type="entry name" value="Histidine biosynthesis bifunctional protein HisIE"/>
    <property type="match status" value="1"/>
</dbReference>
<dbReference type="Gene3D" id="3.10.20.810">
    <property type="entry name" value="Phosphoribosyl-AMP cyclohydrolase"/>
    <property type="match status" value="1"/>
</dbReference>
<dbReference type="HAMAP" id="MF_01021">
    <property type="entry name" value="HisI"/>
    <property type="match status" value="1"/>
</dbReference>
<dbReference type="InterPro" id="IPR026660">
    <property type="entry name" value="PRA-CH"/>
</dbReference>
<dbReference type="InterPro" id="IPR002496">
    <property type="entry name" value="PRib_AMP_CycHydrolase_dom"/>
</dbReference>
<dbReference type="InterPro" id="IPR038019">
    <property type="entry name" value="PRib_AMP_CycHydrolase_sf"/>
</dbReference>
<dbReference type="NCBIfam" id="NF000768">
    <property type="entry name" value="PRK00051.1"/>
    <property type="match status" value="1"/>
</dbReference>
<dbReference type="PANTHER" id="PTHR42945">
    <property type="entry name" value="HISTIDINE BIOSYNTHESIS BIFUNCTIONAL PROTEIN"/>
    <property type="match status" value="1"/>
</dbReference>
<dbReference type="PANTHER" id="PTHR42945:SF9">
    <property type="entry name" value="HISTIDINE BIOSYNTHESIS BIFUNCTIONAL PROTEIN HISIE"/>
    <property type="match status" value="1"/>
</dbReference>
<dbReference type="Pfam" id="PF01502">
    <property type="entry name" value="PRA-CH"/>
    <property type="match status" value="1"/>
</dbReference>
<dbReference type="SUPFAM" id="SSF141734">
    <property type="entry name" value="HisI-like"/>
    <property type="match status" value="1"/>
</dbReference>
<reference key="1">
    <citation type="journal article" date="2003" name="Nature">
        <title>Genome sequence of Bacillus cereus and comparative analysis with Bacillus anthracis.</title>
        <authorList>
            <person name="Ivanova N."/>
            <person name="Sorokin A."/>
            <person name="Anderson I."/>
            <person name="Galleron N."/>
            <person name="Candelon B."/>
            <person name="Kapatral V."/>
            <person name="Bhattacharyya A."/>
            <person name="Reznik G."/>
            <person name="Mikhailova N."/>
            <person name="Lapidus A."/>
            <person name="Chu L."/>
            <person name="Mazur M."/>
            <person name="Goltsman E."/>
            <person name="Larsen N."/>
            <person name="D'Souza M."/>
            <person name="Walunas T."/>
            <person name="Grechkin Y."/>
            <person name="Pusch G."/>
            <person name="Haselkorn R."/>
            <person name="Fonstein M."/>
            <person name="Ehrlich S.D."/>
            <person name="Overbeek R."/>
            <person name="Kyrpides N.C."/>
        </authorList>
    </citation>
    <scope>NUCLEOTIDE SEQUENCE [LARGE SCALE GENOMIC DNA]</scope>
    <source>
        <strain>ATCC 14579 / DSM 31 / CCUG 7414 / JCM 2152 / NBRC 15305 / NCIMB 9373 / NCTC 2599 / NRRL B-3711</strain>
    </source>
</reference>
<comment type="function">
    <text evidence="1">Catalyzes the hydrolysis of the adenine ring of phosphoribosyl-AMP.</text>
</comment>
<comment type="catalytic activity">
    <reaction evidence="1">
        <text>1-(5-phospho-beta-D-ribosyl)-5'-AMP + H2O = 1-(5-phospho-beta-D-ribosyl)-5-[(5-phospho-beta-D-ribosylamino)methylideneamino]imidazole-4-carboxamide</text>
        <dbReference type="Rhea" id="RHEA:20049"/>
        <dbReference type="ChEBI" id="CHEBI:15377"/>
        <dbReference type="ChEBI" id="CHEBI:58435"/>
        <dbReference type="ChEBI" id="CHEBI:59457"/>
        <dbReference type="EC" id="3.5.4.19"/>
    </reaction>
</comment>
<comment type="cofactor">
    <cofactor evidence="1">
        <name>Mg(2+)</name>
        <dbReference type="ChEBI" id="CHEBI:18420"/>
    </cofactor>
    <text evidence="1">Binds 1 Mg(2+) ion per subunit.</text>
</comment>
<comment type="cofactor">
    <cofactor evidence="1">
        <name>Zn(2+)</name>
        <dbReference type="ChEBI" id="CHEBI:29105"/>
    </cofactor>
    <text evidence="1">Binds 1 zinc ion per subunit.</text>
</comment>
<comment type="pathway">
    <text evidence="1">Amino-acid biosynthesis; L-histidine biosynthesis; L-histidine from 5-phospho-alpha-D-ribose 1-diphosphate: step 3/9.</text>
</comment>
<comment type="subunit">
    <text evidence="1">Homodimer.</text>
</comment>
<comment type="subcellular location">
    <subcellularLocation>
        <location evidence="1">Cytoplasm</location>
    </subcellularLocation>
</comment>
<comment type="similarity">
    <text evidence="1">Belongs to the PRA-CH family.</text>
</comment>
<feature type="chain" id="PRO_0000136460" description="Phosphoribosyl-AMP cyclohydrolase">
    <location>
        <begin position="1"/>
        <end position="101"/>
    </location>
</feature>
<feature type="binding site" evidence="1">
    <location>
        <position position="71"/>
    </location>
    <ligand>
        <name>Mg(2+)</name>
        <dbReference type="ChEBI" id="CHEBI:18420"/>
    </ligand>
</feature>
<feature type="binding site" evidence="1">
    <location>
        <position position="72"/>
    </location>
    <ligand>
        <name>Zn(2+)</name>
        <dbReference type="ChEBI" id="CHEBI:29105"/>
        <note>ligand shared between dimeric partners</note>
    </ligand>
</feature>
<feature type="binding site" evidence="1">
    <location>
        <position position="73"/>
    </location>
    <ligand>
        <name>Mg(2+)</name>
        <dbReference type="ChEBI" id="CHEBI:18420"/>
    </ligand>
</feature>
<feature type="binding site" evidence="1">
    <location>
        <position position="75"/>
    </location>
    <ligand>
        <name>Mg(2+)</name>
        <dbReference type="ChEBI" id="CHEBI:18420"/>
    </ligand>
</feature>
<feature type="binding site" evidence="1">
    <location>
        <position position="88"/>
    </location>
    <ligand>
        <name>Zn(2+)</name>
        <dbReference type="ChEBI" id="CHEBI:29105"/>
        <note>ligand shared between dimeric partners</note>
    </ligand>
</feature>
<feature type="binding site" evidence="1">
    <location>
        <position position="95"/>
    </location>
    <ligand>
        <name>Zn(2+)</name>
        <dbReference type="ChEBI" id="CHEBI:29105"/>
        <note>ligand shared between dimeric partners</note>
    </ligand>
</feature>
<gene>
    <name evidence="1" type="primary">hisI</name>
    <name type="ordered locus">BC_1411</name>
</gene>
<protein>
    <recommendedName>
        <fullName evidence="1">Phosphoribosyl-AMP cyclohydrolase</fullName>
        <shortName evidence="1">PRA-CH</shortName>
        <ecNumber evidence="1">3.5.4.19</ecNumber>
    </recommendedName>
</protein>
<evidence type="ECO:0000255" key="1">
    <source>
        <dbReference type="HAMAP-Rule" id="MF_01021"/>
    </source>
</evidence>
<sequence length="101" mass="11639">MKPNFSKGLIPAIVIEEGTKDVLMLAYMNEEAYKKTLETKRTWFYSRSRQSLWNKGETSGNVQYVQSLYLDCDQDSIVVNVKQVGPACHTGEKTCFYYQII</sequence>
<organism>
    <name type="scientific">Bacillus cereus (strain ATCC 14579 / DSM 31 / CCUG 7414 / JCM 2152 / NBRC 15305 / NCIMB 9373 / NCTC 2599 / NRRL B-3711)</name>
    <dbReference type="NCBI Taxonomy" id="226900"/>
    <lineage>
        <taxon>Bacteria</taxon>
        <taxon>Bacillati</taxon>
        <taxon>Bacillota</taxon>
        <taxon>Bacilli</taxon>
        <taxon>Bacillales</taxon>
        <taxon>Bacillaceae</taxon>
        <taxon>Bacillus</taxon>
        <taxon>Bacillus cereus group</taxon>
    </lineage>
</organism>